<dbReference type="EMBL" id="DQ291132">
    <property type="protein sequence ID" value="ABB81956.1"/>
    <property type="molecule type" value="Genomic_DNA"/>
</dbReference>
<dbReference type="RefSeq" id="YP_635888.1">
    <property type="nucleotide sequence ID" value="NC_008099.1"/>
</dbReference>
<dbReference type="SMR" id="Q20EV7"/>
<dbReference type="GeneID" id="4100082"/>
<dbReference type="GO" id="GO:0009535">
    <property type="term" value="C:chloroplast thylakoid membrane"/>
    <property type="evidence" value="ECO:0007669"/>
    <property type="project" value="UniProtKB-SubCell"/>
</dbReference>
<dbReference type="GO" id="GO:0045259">
    <property type="term" value="C:proton-transporting ATP synthase complex"/>
    <property type="evidence" value="ECO:0007669"/>
    <property type="project" value="UniProtKB-KW"/>
</dbReference>
<dbReference type="GO" id="GO:0033177">
    <property type="term" value="C:proton-transporting two-sector ATPase complex, proton-transporting domain"/>
    <property type="evidence" value="ECO:0007669"/>
    <property type="project" value="InterPro"/>
</dbReference>
<dbReference type="GO" id="GO:0008289">
    <property type="term" value="F:lipid binding"/>
    <property type="evidence" value="ECO:0007669"/>
    <property type="project" value="UniProtKB-KW"/>
</dbReference>
<dbReference type="GO" id="GO:0046933">
    <property type="term" value="F:proton-transporting ATP synthase activity, rotational mechanism"/>
    <property type="evidence" value="ECO:0007669"/>
    <property type="project" value="UniProtKB-UniRule"/>
</dbReference>
<dbReference type="CDD" id="cd18183">
    <property type="entry name" value="ATP-synt_Fo_c_ATPH"/>
    <property type="match status" value="1"/>
</dbReference>
<dbReference type="FunFam" id="1.20.20.10:FF:000001">
    <property type="entry name" value="ATP synthase subunit c, chloroplastic"/>
    <property type="match status" value="1"/>
</dbReference>
<dbReference type="Gene3D" id="1.20.20.10">
    <property type="entry name" value="F1F0 ATP synthase subunit C"/>
    <property type="match status" value="1"/>
</dbReference>
<dbReference type="HAMAP" id="MF_01396">
    <property type="entry name" value="ATP_synth_c_bact"/>
    <property type="match status" value="1"/>
</dbReference>
<dbReference type="InterPro" id="IPR005953">
    <property type="entry name" value="ATP_synth_csu_bac/chlpt"/>
</dbReference>
<dbReference type="InterPro" id="IPR000454">
    <property type="entry name" value="ATP_synth_F0_csu"/>
</dbReference>
<dbReference type="InterPro" id="IPR020537">
    <property type="entry name" value="ATP_synth_F0_csu_DDCD_BS"/>
</dbReference>
<dbReference type="InterPro" id="IPR038662">
    <property type="entry name" value="ATP_synth_F0_csu_sf"/>
</dbReference>
<dbReference type="InterPro" id="IPR002379">
    <property type="entry name" value="ATPase_proteolipid_c-like_dom"/>
</dbReference>
<dbReference type="InterPro" id="IPR035921">
    <property type="entry name" value="F/V-ATP_Csub_sf"/>
</dbReference>
<dbReference type="NCBIfam" id="TIGR01260">
    <property type="entry name" value="ATP_synt_c"/>
    <property type="match status" value="1"/>
</dbReference>
<dbReference type="NCBIfam" id="NF005608">
    <property type="entry name" value="PRK07354.1"/>
    <property type="match status" value="1"/>
</dbReference>
<dbReference type="PANTHER" id="PTHR10031">
    <property type="entry name" value="ATP SYNTHASE LIPID-BINDING PROTEIN, MITOCHONDRIAL"/>
    <property type="match status" value="1"/>
</dbReference>
<dbReference type="PANTHER" id="PTHR10031:SF0">
    <property type="entry name" value="ATPASE PROTEIN 9"/>
    <property type="match status" value="1"/>
</dbReference>
<dbReference type="Pfam" id="PF00137">
    <property type="entry name" value="ATP-synt_C"/>
    <property type="match status" value="1"/>
</dbReference>
<dbReference type="PRINTS" id="PR00124">
    <property type="entry name" value="ATPASEC"/>
</dbReference>
<dbReference type="SUPFAM" id="SSF81333">
    <property type="entry name" value="F1F0 ATP synthase subunit C"/>
    <property type="match status" value="1"/>
</dbReference>
<dbReference type="PROSITE" id="PS00605">
    <property type="entry name" value="ATPASE_C"/>
    <property type="match status" value="1"/>
</dbReference>
<organism>
    <name type="scientific">Oltmannsiellopsis viridis</name>
    <name type="common">Marine flagellate</name>
    <name type="synonym">Oltmannsiella viridis</name>
    <dbReference type="NCBI Taxonomy" id="51324"/>
    <lineage>
        <taxon>Eukaryota</taxon>
        <taxon>Viridiplantae</taxon>
        <taxon>Chlorophyta</taxon>
        <taxon>Ulvophyceae</taxon>
        <taxon>Oltmannsiellopsidales</taxon>
        <taxon>Oltmannsiellopsidaceae</taxon>
        <taxon>Oltmannsiellopsis</taxon>
    </lineage>
</organism>
<accession>Q20EV7</accession>
<geneLocation type="chloroplast"/>
<sequence>MNPLIAAASVVAAGLSVGLAAIGPGMGQGTAAGYAVEGIARQPEAEGKIRGALLLSFAFMESLTIYGLVVALALLFANPFAS</sequence>
<comment type="function">
    <text evidence="1">F(1)F(0) ATP synthase produces ATP from ADP in the presence of a proton or sodium gradient. F-type ATPases consist of two structural domains, F(1) containing the extramembraneous catalytic core and F(0) containing the membrane proton channel, linked together by a central stalk and a peripheral stalk. During catalysis, ATP synthesis in the catalytic domain of F(1) is coupled via a rotary mechanism of the central stalk subunits to proton translocation.</text>
</comment>
<comment type="function">
    <text evidence="1">Key component of the F(0) channel; it plays a direct role in translocation across the membrane. A homomeric c-ring of between 10-14 subunits forms the central stalk rotor element with the F(1) delta and epsilon subunits.</text>
</comment>
<comment type="subunit">
    <text evidence="1">F-type ATPases have 2 components, F(1) - the catalytic core - and F(0) - the membrane proton channel. F(1) has five subunits: alpha(3), beta(3), gamma(1), delta(1), epsilon(1). F(0) has four main subunits: a(1), b(1), b'(1) and c(10-14). The alpha and beta chains form an alternating ring which encloses part of the gamma chain. F(1) is attached to F(0) by a central stalk formed by the gamma and epsilon chains, while a peripheral stalk is formed by the delta, b and b' chains.</text>
</comment>
<comment type="subcellular location">
    <subcellularLocation>
        <location evidence="1">Plastid</location>
        <location evidence="1">Chloroplast thylakoid membrane</location>
        <topology evidence="1">Multi-pass membrane protein</topology>
    </subcellularLocation>
</comment>
<comment type="miscellaneous">
    <text>In plastids the F-type ATPase is also known as CF(1)CF(0).</text>
</comment>
<comment type="similarity">
    <text evidence="1">Belongs to the ATPase C chain family.</text>
</comment>
<reference key="1">
    <citation type="journal article" date="2006" name="BMC Biol.">
        <title>The complete chloroplast DNA sequence of the green alga Oltmannsiellopsis viridis reveals a distinctive quadripartite architecture in the chloroplast genome of early diverging ulvophytes.</title>
        <authorList>
            <person name="Pombert J.-F."/>
            <person name="Lemieux C."/>
            <person name="Turmel M."/>
        </authorList>
    </citation>
    <scope>NUCLEOTIDE SEQUENCE [LARGE SCALE GENOMIC DNA]</scope>
</reference>
<gene>
    <name evidence="1" type="primary">atpH</name>
</gene>
<protein>
    <recommendedName>
        <fullName evidence="1">ATP synthase subunit c, chloroplastic</fullName>
    </recommendedName>
    <alternativeName>
        <fullName evidence="1">ATP synthase F(0) sector subunit c</fullName>
    </alternativeName>
    <alternativeName>
        <fullName evidence="1">ATPase subunit III</fullName>
    </alternativeName>
    <alternativeName>
        <fullName evidence="1">F-type ATPase subunit c</fullName>
        <shortName evidence="1">F-ATPase subunit c</shortName>
    </alternativeName>
    <alternativeName>
        <fullName evidence="1">Lipid-binding protein</fullName>
    </alternativeName>
</protein>
<feature type="chain" id="PRO_0000362948" description="ATP synthase subunit c, chloroplastic">
    <location>
        <begin position="1"/>
        <end position="82"/>
    </location>
</feature>
<feature type="transmembrane region" description="Helical" evidence="1">
    <location>
        <begin position="3"/>
        <end position="23"/>
    </location>
</feature>
<feature type="transmembrane region" description="Helical" evidence="1">
    <location>
        <begin position="57"/>
        <end position="77"/>
    </location>
</feature>
<feature type="site" description="Reversibly protonated during proton transport" evidence="1">
    <location>
        <position position="61"/>
    </location>
</feature>
<keyword id="KW-0066">ATP synthesis</keyword>
<keyword id="KW-0138">CF(0)</keyword>
<keyword id="KW-0150">Chloroplast</keyword>
<keyword id="KW-0375">Hydrogen ion transport</keyword>
<keyword id="KW-0406">Ion transport</keyword>
<keyword id="KW-0446">Lipid-binding</keyword>
<keyword id="KW-0472">Membrane</keyword>
<keyword id="KW-0934">Plastid</keyword>
<keyword id="KW-0793">Thylakoid</keyword>
<keyword id="KW-0812">Transmembrane</keyword>
<keyword id="KW-1133">Transmembrane helix</keyword>
<keyword id="KW-0813">Transport</keyword>
<proteinExistence type="inferred from homology"/>
<evidence type="ECO:0000255" key="1">
    <source>
        <dbReference type="HAMAP-Rule" id="MF_01396"/>
    </source>
</evidence>
<name>ATPH_OLTVI</name>